<protein>
    <recommendedName>
        <fullName evidence="3">Type 3 secretion system ATPase</fullName>
        <shortName evidence="3">T3SS ATPase</shortName>
        <ecNumber evidence="3">7.4.2.8</ecNumber>
    </recommendedName>
    <alternativeName>
        <fullName>Yop proteins secretion ATPase</fullName>
    </alternativeName>
</protein>
<geneLocation type="plasmid">
    <name>pIB1</name>
</geneLocation>
<geneLocation type="plasmid">
    <name>pYV</name>
</geneLocation>
<evidence type="ECO:0000250" key="1">
    <source>
        <dbReference type="UniProtKB" id="P0A1B9"/>
    </source>
</evidence>
<evidence type="ECO:0000250" key="2">
    <source>
        <dbReference type="UniProtKB" id="P0A1C1"/>
    </source>
</evidence>
<evidence type="ECO:0000250" key="3">
    <source>
        <dbReference type="UniProtKB" id="P40290"/>
    </source>
</evidence>
<evidence type="ECO:0000269" key="4">
    <source>
    </source>
</evidence>
<evidence type="ECO:0000303" key="5">
    <source>
    </source>
</evidence>
<evidence type="ECO:0000303" key="6">
    <source>
    </source>
</evidence>
<evidence type="ECO:0000305" key="7"/>
<sequence length="439" mass="47801">MLSLDQIPHHIRHGIVGSRLIQIRGRVTQVTGTLLKAVVPGVRIGELCYLRNPDNSLSLQAEVIGFAQHQALLIPLGEMYGISSNTEVSPTGTMHQVGVGEHLLGQVLDGLGQPFDGGHLPEPAAWYPVYQDAPAPMSRKLITTPLSLGIRVIDGLLTCGEGQRMGIFAAAGGGKSTLLASLIRSAEVDVTVLALIGERGREVREFIESDLGEEGLRKAVLVVATSDRPSMERAKAGFVATSIAEYFRDQGKRVLLLMDSVTRFARAQREIGLAAGEPPTRRGYPPSVFAALPRLMERAGQSSKGSITALYTVLVEGDDMTEPVADETRSILDGHIILSRKLAAANHYPAIDVLRSASRVMNQIVSKEHKTWAGDLRRLLAKYEEVELLLQIGEYQKGQDKEADQAIERMGAIRGWLCQGTHELSHFNETLNLLETLTQ</sequence>
<dbReference type="EC" id="7.4.2.8" evidence="3"/>
<dbReference type="EMBL" id="U00998">
    <property type="protein sequence ID" value="AAA73398.1"/>
    <property type="molecule type" value="Unassigned_DNA"/>
</dbReference>
<dbReference type="EMBL" id="L23522">
    <property type="protein sequence ID" value="AAA20119.1"/>
    <property type="molecule type" value="Unassigned_DNA"/>
</dbReference>
<dbReference type="EMBL" id="BX936399">
    <property type="protein sequence ID" value="CAF25410.1"/>
    <property type="molecule type" value="Genomic_DNA"/>
</dbReference>
<dbReference type="RefSeq" id="WP_002212955.1">
    <property type="nucleotide sequence ID" value="NZ_CP009711.1"/>
</dbReference>
<dbReference type="SMR" id="P40291"/>
<dbReference type="KEGG" id="ypo:BZ17_4267"/>
<dbReference type="KEGG" id="yps:pYV0067"/>
<dbReference type="PATRIC" id="fig|273123.14.peg.4503"/>
<dbReference type="PHI-base" id="PHI:7902"/>
<dbReference type="Proteomes" id="UP000001011">
    <property type="component" value="Plasmid pYV"/>
</dbReference>
<dbReference type="GO" id="GO:0005737">
    <property type="term" value="C:cytoplasm"/>
    <property type="evidence" value="ECO:0007669"/>
    <property type="project" value="UniProtKB-SubCell"/>
</dbReference>
<dbReference type="GO" id="GO:0030257">
    <property type="term" value="C:type III protein secretion system complex"/>
    <property type="evidence" value="ECO:0007669"/>
    <property type="project" value="InterPro"/>
</dbReference>
<dbReference type="GO" id="GO:0005524">
    <property type="term" value="F:ATP binding"/>
    <property type="evidence" value="ECO:0007669"/>
    <property type="project" value="UniProtKB-KW"/>
</dbReference>
<dbReference type="GO" id="GO:0016887">
    <property type="term" value="F:ATP hydrolysis activity"/>
    <property type="evidence" value="ECO:0007669"/>
    <property type="project" value="InterPro"/>
</dbReference>
<dbReference type="GO" id="GO:0008564">
    <property type="term" value="F:protein-exporting ATPase activity"/>
    <property type="evidence" value="ECO:0007669"/>
    <property type="project" value="UniProtKB-EC"/>
</dbReference>
<dbReference type="GO" id="GO:0046933">
    <property type="term" value="F:proton-transporting ATP synthase activity, rotational mechanism"/>
    <property type="evidence" value="ECO:0007669"/>
    <property type="project" value="TreeGrafter"/>
</dbReference>
<dbReference type="GO" id="GO:0046961">
    <property type="term" value="F:proton-transporting ATPase activity, rotational mechanism"/>
    <property type="evidence" value="ECO:0007669"/>
    <property type="project" value="InterPro"/>
</dbReference>
<dbReference type="GO" id="GO:0030254">
    <property type="term" value="P:protein secretion by the type III secretion system"/>
    <property type="evidence" value="ECO:0007669"/>
    <property type="project" value="InterPro"/>
</dbReference>
<dbReference type="CDD" id="cd18117">
    <property type="entry name" value="ATP-synt_flagellum-secretory_path_III_N"/>
    <property type="match status" value="1"/>
</dbReference>
<dbReference type="CDD" id="cd01136">
    <property type="entry name" value="ATPase_flagellum-secretory_path_III"/>
    <property type="match status" value="1"/>
</dbReference>
<dbReference type="FunFam" id="3.40.50.12240:FF:000002">
    <property type="entry name" value="Flagellum-specific ATP synthase FliI"/>
    <property type="match status" value="1"/>
</dbReference>
<dbReference type="Gene3D" id="3.40.50.12240">
    <property type="match status" value="1"/>
</dbReference>
<dbReference type="InterPro" id="IPR003593">
    <property type="entry name" value="AAA+_ATPase"/>
</dbReference>
<dbReference type="InterPro" id="IPR020003">
    <property type="entry name" value="ATPase_a/bsu_AS"/>
</dbReference>
<dbReference type="InterPro" id="IPR050053">
    <property type="entry name" value="ATPase_alpha/beta_chains"/>
</dbReference>
<dbReference type="InterPro" id="IPR004100">
    <property type="entry name" value="ATPase_F1/V1/A1_a/bsu_N"/>
</dbReference>
<dbReference type="InterPro" id="IPR000194">
    <property type="entry name" value="ATPase_F1/V1/A1_a/bsu_nucl-bd"/>
</dbReference>
<dbReference type="InterPro" id="IPR005714">
    <property type="entry name" value="ATPase_T3SS_FliI/YscN"/>
</dbReference>
<dbReference type="InterPro" id="IPR013380">
    <property type="entry name" value="ATPase_T3SS_SctN"/>
</dbReference>
<dbReference type="InterPro" id="IPR027417">
    <property type="entry name" value="P-loop_NTPase"/>
</dbReference>
<dbReference type="InterPro" id="IPR040627">
    <property type="entry name" value="T3SS_ATPase_C"/>
</dbReference>
<dbReference type="NCBIfam" id="TIGR01026">
    <property type="entry name" value="fliI_yscN"/>
    <property type="match status" value="1"/>
</dbReference>
<dbReference type="NCBIfam" id="TIGR02546">
    <property type="entry name" value="III_secr_ATP"/>
    <property type="match status" value="1"/>
</dbReference>
<dbReference type="NCBIfam" id="NF005391">
    <property type="entry name" value="PRK06936.1"/>
    <property type="match status" value="1"/>
</dbReference>
<dbReference type="PANTHER" id="PTHR15184">
    <property type="entry name" value="ATP SYNTHASE"/>
    <property type="match status" value="1"/>
</dbReference>
<dbReference type="PANTHER" id="PTHR15184:SF9">
    <property type="entry name" value="SPI-1 TYPE 3 SECRETION SYSTEM ATPASE"/>
    <property type="match status" value="1"/>
</dbReference>
<dbReference type="Pfam" id="PF00006">
    <property type="entry name" value="ATP-synt_ab"/>
    <property type="match status" value="1"/>
</dbReference>
<dbReference type="Pfam" id="PF02874">
    <property type="entry name" value="ATP-synt_ab_N"/>
    <property type="match status" value="1"/>
</dbReference>
<dbReference type="Pfam" id="PF18269">
    <property type="entry name" value="T3SS_ATPase_C"/>
    <property type="match status" value="1"/>
</dbReference>
<dbReference type="SMART" id="SM00382">
    <property type="entry name" value="AAA"/>
    <property type="match status" value="1"/>
</dbReference>
<dbReference type="SUPFAM" id="SSF52540">
    <property type="entry name" value="P-loop containing nucleoside triphosphate hydrolases"/>
    <property type="match status" value="1"/>
</dbReference>
<dbReference type="PROSITE" id="PS00152">
    <property type="entry name" value="ATPASE_ALPHA_BETA"/>
    <property type="match status" value="1"/>
</dbReference>
<gene>
    <name evidence="6" type="primary">sctN</name>
    <name evidence="5" type="synonym">yscN</name>
    <name type="ordered locus">pYV0067</name>
</gene>
<name>SCTN_YERPS</name>
<comment type="function">
    <text evidence="1 2 3">ATPase component of the type III secretion system (T3SS), also called injectisome, which is used to inject bacterial effector proteins into eukaryotic host cells (By similarity). Acts as a molecular motor to provide the energy that is required for the export of proteins (By similarity). Required for type III secretion apparatus (T3SA) formation, proper protein secretion, host cell invasion and virulence (By similarity). May play a critical role in T3SS substrate recognition, disassembly of the effector/chaperone complex and unfolding of the effector in an ATP-dependent manner prior to secretion (By similarity).</text>
</comment>
<comment type="catalytic activity">
    <reaction evidence="3">
        <text>ATP + H2O + cellular proteinSide 1 = ADP + phosphate + cellular proteinSide 2.</text>
        <dbReference type="EC" id="7.4.2.8"/>
    </reaction>
</comment>
<comment type="subunit">
    <text evidence="3 4">The core secretion machinery of the T3SS is composed of approximately 20 different proteins, including cytoplasmic components, a base, an export apparatus and a needle (PubMed:30107569). This subunit is part of the cytosolic complex (By similarity). Forms homohexamers (By similarity).</text>
</comment>
<comment type="subcellular location">
    <subcellularLocation>
        <location evidence="3">Cytoplasm</location>
    </subcellularLocation>
</comment>
<comment type="similarity">
    <text evidence="7">Belongs to the ATPase alpha/beta chains family. T3SS ATPase subfamily.</text>
</comment>
<organism>
    <name type="scientific">Yersinia pseudotuberculosis serotype I (strain IP32953)</name>
    <dbReference type="NCBI Taxonomy" id="273123"/>
    <lineage>
        <taxon>Bacteria</taxon>
        <taxon>Pseudomonadati</taxon>
        <taxon>Pseudomonadota</taxon>
        <taxon>Gammaproteobacteria</taxon>
        <taxon>Enterobacterales</taxon>
        <taxon>Yersiniaceae</taxon>
        <taxon>Yersinia</taxon>
    </lineage>
</organism>
<feature type="chain" id="PRO_0000144710" description="Type 3 secretion system ATPase">
    <location>
        <begin position="1"/>
        <end position="439"/>
    </location>
</feature>
<feature type="binding site" evidence="2">
    <location>
        <begin position="172"/>
        <end position="177"/>
    </location>
    <ligand>
        <name>ATP</name>
        <dbReference type="ChEBI" id="CHEBI:30616"/>
    </ligand>
</feature>
<feature type="sequence conflict" description="In Ref. 1; AAA73398/AAA20119." evidence="7" ref="1">
    <original>R</original>
    <variation>P</variation>
    <location>
        <position position="201"/>
    </location>
</feature>
<feature type="sequence conflict" description="In Ref. 1; AAA73398/AAA20119." evidence="7" ref="1">
    <original>V</original>
    <variation>F</variation>
    <location>
        <position position="220"/>
    </location>
</feature>
<feature type="sequence conflict" description="In Ref. 1; AAA73398/AAA20119." evidence="7" ref="1">
    <original>D</original>
    <variation>H</variation>
    <location>
        <position position="375"/>
    </location>
</feature>
<accession>P40291</accession>
<accession>Q663J9</accession>
<reference key="1">
    <citation type="journal article" date="1994" name="J. Bacteriol.">
        <title>The lcrB (yscN/U) gene cluster of Yersinia pseudotuberculosis is involved in Yop secretion and shows high homology to the spa gene clusters of Shigella flexneri and Salmonella typhimurium.</title>
        <authorList>
            <person name="Bergman T."/>
            <person name="Erickson K."/>
            <person name="Galyov E."/>
            <person name="Persson C."/>
            <person name="Wolf-Watz H."/>
        </authorList>
    </citation>
    <scope>NUCLEOTIDE SEQUENCE [GENOMIC DNA]</scope>
    <source>
        <strain>YPIII / Serotype O:3</strain>
        <plasmid>pIB1</plasmid>
    </source>
</reference>
<reference key="2">
    <citation type="journal article" date="2004" name="Proc. Natl. Acad. Sci. U.S.A.">
        <title>Insights into the evolution of Yersinia pestis through whole-genome comparison with Yersinia pseudotuberculosis.</title>
        <authorList>
            <person name="Chain P.S.G."/>
            <person name="Carniel E."/>
            <person name="Larimer F.W."/>
            <person name="Lamerdin J."/>
            <person name="Stoutland P.O."/>
            <person name="Regala W.M."/>
            <person name="Georgescu A.M."/>
            <person name="Vergez L.M."/>
            <person name="Land M.L."/>
            <person name="Motin V.L."/>
            <person name="Brubaker R.R."/>
            <person name="Fowler J."/>
            <person name="Hinnebusch J."/>
            <person name="Marceau M."/>
            <person name="Medigue C."/>
            <person name="Simonet M."/>
            <person name="Chenal-Francisque V."/>
            <person name="Souza B."/>
            <person name="Dacheux D."/>
            <person name="Elliott J.M."/>
            <person name="Derbise A."/>
            <person name="Hauser L.J."/>
            <person name="Garcia E."/>
        </authorList>
    </citation>
    <scope>NUCLEOTIDE SEQUENCE [LARGE SCALE GENOMIC DNA]</scope>
    <source>
        <strain>IP32953</strain>
        <plasmid>pYV</plasmid>
    </source>
</reference>
<reference key="3">
    <citation type="journal article" date="1998" name="Microbiol. Mol. Biol. Rev.">
        <title>Type III protein secretion systems in bacterial pathogens of animals and plants.</title>
        <authorList>
            <person name="Hueck C.J."/>
        </authorList>
    </citation>
    <scope>REVIEW</scope>
    <scope>NOMENCLATURE</scope>
</reference>
<reference key="4">
    <citation type="journal article" date="2018" name="FEMS Microbiol. Lett.">
        <title>Bacterial type III secretion systems: a complex device for the delivery of bacterial effector proteins into eukaryotic host cells.</title>
        <authorList>
            <person name="Wagner S."/>
            <person name="Grin I."/>
            <person name="Malmsheimer S."/>
            <person name="Singh N."/>
            <person name="Torres-Vargas C.E."/>
            <person name="Westerhausen S."/>
        </authorList>
    </citation>
    <scope>REVIEW</scope>
    <scope>SUBUNIT</scope>
</reference>
<proteinExistence type="evidence at protein level"/>
<keyword id="KW-0067">ATP-binding</keyword>
<keyword id="KW-0963">Cytoplasm</keyword>
<keyword id="KW-0547">Nucleotide-binding</keyword>
<keyword id="KW-0614">Plasmid</keyword>
<keyword id="KW-0653">Protein transport</keyword>
<keyword id="KW-1278">Translocase</keyword>
<keyword id="KW-0813">Transport</keyword>
<keyword id="KW-0843">Virulence</keyword>